<keyword id="KW-0030">Aminoacyl-tRNA synthetase</keyword>
<keyword id="KW-0067">ATP-binding</keyword>
<keyword id="KW-0963">Cytoplasm</keyword>
<keyword id="KW-0436">Ligase</keyword>
<keyword id="KW-0479">Metal-binding</keyword>
<keyword id="KW-0547">Nucleotide-binding</keyword>
<keyword id="KW-0648">Protein biosynthesis</keyword>
<keyword id="KW-1185">Reference proteome</keyword>
<keyword id="KW-0862">Zinc</keyword>
<comment type="catalytic activity">
    <reaction evidence="1">
        <text>tRNA(Cys) + L-cysteine + ATP = L-cysteinyl-tRNA(Cys) + AMP + diphosphate</text>
        <dbReference type="Rhea" id="RHEA:17773"/>
        <dbReference type="Rhea" id="RHEA-COMP:9661"/>
        <dbReference type="Rhea" id="RHEA-COMP:9679"/>
        <dbReference type="ChEBI" id="CHEBI:30616"/>
        <dbReference type="ChEBI" id="CHEBI:33019"/>
        <dbReference type="ChEBI" id="CHEBI:35235"/>
        <dbReference type="ChEBI" id="CHEBI:78442"/>
        <dbReference type="ChEBI" id="CHEBI:78517"/>
        <dbReference type="ChEBI" id="CHEBI:456215"/>
        <dbReference type="EC" id="6.1.1.16"/>
    </reaction>
</comment>
<comment type="cofactor">
    <cofactor evidence="1">
        <name>Zn(2+)</name>
        <dbReference type="ChEBI" id="CHEBI:29105"/>
    </cofactor>
    <text evidence="1">Binds 1 zinc ion per subunit.</text>
</comment>
<comment type="subunit">
    <text evidence="1">Monomer.</text>
</comment>
<comment type="subcellular location">
    <subcellularLocation>
        <location evidence="1">Cytoplasm</location>
    </subcellularLocation>
</comment>
<comment type="similarity">
    <text evidence="1">Belongs to the class-I aminoacyl-tRNA synthetase family.</text>
</comment>
<accession>Q1QVV6</accession>
<sequence length="461" mass="51433">MQIYNTLTRRKETFTPLDAGRVRMYVCGITVYDYCHIGHARVMVAFDMITRYLRWRGFEVDYVRNITDIDDKILKRAEENDEPIAALTERMIAAMHEDEGRLGVLRPDREPRATAHVDDIVAMVQRLIDKGYAYPAANGDVYYRVRRFEGYGKLSNRDLDDMRAGSRVEVETAKEDPLDFVLWKAAKPGEASWPSPWGDGRPGWHIECSAMSTCCLGDTFDIHGGGPDLVFPHHENEIAQSEAATGRPYVNTWMHAGAVRVDQEKMSKSLGNFFTIREVLEAHAPEVVRYLLLASHYRSPINYAPDALSDARRSLERFYNALQGVAPVAGEVAAGYRERFIAAMDDDFNTAEALAVLFDLARELNRAKQEAPAHAPALAHELKELGGVLGLFGQDPEGFLQAGAGRLPMSEEDIEARIEARAQAKKAKDFATADGIRDELAALGIVLKDGRDGTTWVVEGD</sequence>
<reference key="1">
    <citation type="journal article" date="2011" name="Stand. Genomic Sci.">
        <title>Complete genome sequence of the halophilic and highly halotolerant Chromohalobacter salexigens type strain (1H11(T)).</title>
        <authorList>
            <person name="Copeland A."/>
            <person name="O'Connor K."/>
            <person name="Lucas S."/>
            <person name="Lapidus A."/>
            <person name="Berry K.W."/>
            <person name="Detter J.C."/>
            <person name="Del Rio T.G."/>
            <person name="Hammon N."/>
            <person name="Dalin E."/>
            <person name="Tice H."/>
            <person name="Pitluck S."/>
            <person name="Bruce D."/>
            <person name="Goodwin L."/>
            <person name="Han C."/>
            <person name="Tapia R."/>
            <person name="Saunders E."/>
            <person name="Schmutz J."/>
            <person name="Brettin T."/>
            <person name="Larimer F."/>
            <person name="Land M."/>
            <person name="Hauser L."/>
            <person name="Vargas C."/>
            <person name="Nieto J.J."/>
            <person name="Kyrpides N.C."/>
            <person name="Ivanova N."/>
            <person name="Goker M."/>
            <person name="Klenk H.P."/>
            <person name="Csonka L.N."/>
            <person name="Woyke T."/>
        </authorList>
    </citation>
    <scope>NUCLEOTIDE SEQUENCE [LARGE SCALE GENOMIC DNA]</scope>
    <source>
        <strain>ATCC BAA-138 / DSM 3043 / CIP 106854 / NCIMB 13768 / 1H11</strain>
    </source>
</reference>
<name>SYC_CHRSD</name>
<dbReference type="EC" id="6.1.1.16" evidence="1"/>
<dbReference type="EMBL" id="CP000285">
    <property type="protein sequence ID" value="ABE59402.1"/>
    <property type="molecule type" value="Genomic_DNA"/>
</dbReference>
<dbReference type="RefSeq" id="WP_011507348.1">
    <property type="nucleotide sequence ID" value="NC_007963.1"/>
</dbReference>
<dbReference type="SMR" id="Q1QVV6"/>
<dbReference type="STRING" id="290398.Csal_2051"/>
<dbReference type="GeneID" id="95334766"/>
<dbReference type="KEGG" id="csa:Csal_2051"/>
<dbReference type="eggNOG" id="COG0215">
    <property type="taxonomic scope" value="Bacteria"/>
</dbReference>
<dbReference type="HOGENOM" id="CLU_013528_0_1_6"/>
<dbReference type="OrthoDB" id="9815130at2"/>
<dbReference type="Proteomes" id="UP000000239">
    <property type="component" value="Chromosome"/>
</dbReference>
<dbReference type="GO" id="GO:0005829">
    <property type="term" value="C:cytosol"/>
    <property type="evidence" value="ECO:0007669"/>
    <property type="project" value="TreeGrafter"/>
</dbReference>
<dbReference type="GO" id="GO:0005524">
    <property type="term" value="F:ATP binding"/>
    <property type="evidence" value="ECO:0007669"/>
    <property type="project" value="UniProtKB-UniRule"/>
</dbReference>
<dbReference type="GO" id="GO:0004817">
    <property type="term" value="F:cysteine-tRNA ligase activity"/>
    <property type="evidence" value="ECO:0007669"/>
    <property type="project" value="UniProtKB-UniRule"/>
</dbReference>
<dbReference type="GO" id="GO:0008270">
    <property type="term" value="F:zinc ion binding"/>
    <property type="evidence" value="ECO:0007669"/>
    <property type="project" value="UniProtKB-UniRule"/>
</dbReference>
<dbReference type="GO" id="GO:0006423">
    <property type="term" value="P:cysteinyl-tRNA aminoacylation"/>
    <property type="evidence" value="ECO:0007669"/>
    <property type="project" value="UniProtKB-UniRule"/>
</dbReference>
<dbReference type="CDD" id="cd07963">
    <property type="entry name" value="Anticodon_Ia_Cys"/>
    <property type="match status" value="1"/>
</dbReference>
<dbReference type="CDD" id="cd00672">
    <property type="entry name" value="CysRS_core"/>
    <property type="match status" value="1"/>
</dbReference>
<dbReference type="FunFam" id="3.40.50.620:FF:000009">
    <property type="entry name" value="Cysteine--tRNA ligase"/>
    <property type="match status" value="1"/>
</dbReference>
<dbReference type="Gene3D" id="1.20.120.1910">
    <property type="entry name" value="Cysteine-tRNA ligase, C-terminal anti-codon recognition domain"/>
    <property type="match status" value="1"/>
</dbReference>
<dbReference type="Gene3D" id="3.40.50.620">
    <property type="entry name" value="HUPs"/>
    <property type="match status" value="1"/>
</dbReference>
<dbReference type="HAMAP" id="MF_00041">
    <property type="entry name" value="Cys_tRNA_synth"/>
    <property type="match status" value="1"/>
</dbReference>
<dbReference type="InterPro" id="IPR015803">
    <property type="entry name" value="Cys-tRNA-ligase"/>
</dbReference>
<dbReference type="InterPro" id="IPR015273">
    <property type="entry name" value="Cys-tRNA-synt_Ia_DALR"/>
</dbReference>
<dbReference type="InterPro" id="IPR024909">
    <property type="entry name" value="Cys-tRNA/MSH_ligase"/>
</dbReference>
<dbReference type="InterPro" id="IPR056411">
    <property type="entry name" value="CysS_C"/>
</dbReference>
<dbReference type="InterPro" id="IPR014729">
    <property type="entry name" value="Rossmann-like_a/b/a_fold"/>
</dbReference>
<dbReference type="InterPro" id="IPR032678">
    <property type="entry name" value="tRNA-synt_1_cat_dom"/>
</dbReference>
<dbReference type="InterPro" id="IPR009080">
    <property type="entry name" value="tRNAsynth_Ia_anticodon-bd"/>
</dbReference>
<dbReference type="NCBIfam" id="TIGR00435">
    <property type="entry name" value="cysS"/>
    <property type="match status" value="1"/>
</dbReference>
<dbReference type="PANTHER" id="PTHR10890:SF3">
    <property type="entry name" value="CYSTEINE--TRNA LIGASE, CYTOPLASMIC"/>
    <property type="match status" value="1"/>
</dbReference>
<dbReference type="PANTHER" id="PTHR10890">
    <property type="entry name" value="CYSTEINYL-TRNA SYNTHETASE"/>
    <property type="match status" value="1"/>
</dbReference>
<dbReference type="Pfam" id="PF23493">
    <property type="entry name" value="CysS_C"/>
    <property type="match status" value="1"/>
</dbReference>
<dbReference type="Pfam" id="PF09190">
    <property type="entry name" value="DALR_2"/>
    <property type="match status" value="1"/>
</dbReference>
<dbReference type="Pfam" id="PF01406">
    <property type="entry name" value="tRNA-synt_1e"/>
    <property type="match status" value="1"/>
</dbReference>
<dbReference type="PRINTS" id="PR00983">
    <property type="entry name" value="TRNASYNTHCYS"/>
</dbReference>
<dbReference type="SMART" id="SM00840">
    <property type="entry name" value="DALR_2"/>
    <property type="match status" value="1"/>
</dbReference>
<dbReference type="SUPFAM" id="SSF47323">
    <property type="entry name" value="Anticodon-binding domain of a subclass of class I aminoacyl-tRNA synthetases"/>
    <property type="match status" value="1"/>
</dbReference>
<dbReference type="SUPFAM" id="SSF52374">
    <property type="entry name" value="Nucleotidylyl transferase"/>
    <property type="match status" value="1"/>
</dbReference>
<evidence type="ECO:0000255" key="1">
    <source>
        <dbReference type="HAMAP-Rule" id="MF_00041"/>
    </source>
</evidence>
<organism>
    <name type="scientific">Chromohalobacter salexigens (strain ATCC BAA-138 / DSM 3043 / CIP 106854 / NCIMB 13768 / 1H11)</name>
    <dbReference type="NCBI Taxonomy" id="290398"/>
    <lineage>
        <taxon>Bacteria</taxon>
        <taxon>Pseudomonadati</taxon>
        <taxon>Pseudomonadota</taxon>
        <taxon>Gammaproteobacteria</taxon>
        <taxon>Oceanospirillales</taxon>
        <taxon>Halomonadaceae</taxon>
        <taxon>Chromohalobacter</taxon>
    </lineage>
</organism>
<feature type="chain" id="PRO_0000332799" description="Cysteine--tRNA ligase">
    <location>
        <begin position="1"/>
        <end position="461"/>
    </location>
</feature>
<feature type="short sequence motif" description="'HIGH' region">
    <location>
        <begin position="29"/>
        <end position="39"/>
    </location>
</feature>
<feature type="short sequence motif" description="'KMSKS' region">
    <location>
        <begin position="265"/>
        <end position="269"/>
    </location>
</feature>
<feature type="binding site" evidence="1">
    <location>
        <position position="27"/>
    </location>
    <ligand>
        <name>Zn(2+)</name>
        <dbReference type="ChEBI" id="CHEBI:29105"/>
    </ligand>
</feature>
<feature type="binding site" evidence="1">
    <location>
        <position position="208"/>
    </location>
    <ligand>
        <name>Zn(2+)</name>
        <dbReference type="ChEBI" id="CHEBI:29105"/>
    </ligand>
</feature>
<feature type="binding site" evidence="1">
    <location>
        <position position="233"/>
    </location>
    <ligand>
        <name>Zn(2+)</name>
        <dbReference type="ChEBI" id="CHEBI:29105"/>
    </ligand>
</feature>
<feature type="binding site" evidence="1">
    <location>
        <position position="237"/>
    </location>
    <ligand>
        <name>Zn(2+)</name>
        <dbReference type="ChEBI" id="CHEBI:29105"/>
    </ligand>
</feature>
<feature type="binding site" evidence="1">
    <location>
        <position position="268"/>
    </location>
    <ligand>
        <name>ATP</name>
        <dbReference type="ChEBI" id="CHEBI:30616"/>
    </ligand>
</feature>
<proteinExistence type="inferred from homology"/>
<protein>
    <recommendedName>
        <fullName evidence="1">Cysteine--tRNA ligase</fullName>
        <ecNumber evidence="1">6.1.1.16</ecNumber>
    </recommendedName>
    <alternativeName>
        <fullName evidence="1">Cysteinyl-tRNA synthetase</fullName>
        <shortName evidence="1">CysRS</shortName>
    </alternativeName>
</protein>
<gene>
    <name evidence="1" type="primary">cysS</name>
    <name type="ordered locus">Csal_2051</name>
</gene>